<dbReference type="EC" id="4.2.1.59" evidence="1"/>
<dbReference type="EMBL" id="CP001127">
    <property type="protein sequence ID" value="ACF93124.1"/>
    <property type="molecule type" value="Genomic_DNA"/>
</dbReference>
<dbReference type="RefSeq" id="WP_000210741.1">
    <property type="nucleotide sequence ID" value="NC_011094.1"/>
</dbReference>
<dbReference type="SMR" id="B4TYE0"/>
<dbReference type="GeneID" id="66754751"/>
<dbReference type="KEGG" id="sew:SeSA_A0253"/>
<dbReference type="HOGENOM" id="CLU_078912_1_0_6"/>
<dbReference type="Proteomes" id="UP000001865">
    <property type="component" value="Chromosome"/>
</dbReference>
<dbReference type="GO" id="GO:0005737">
    <property type="term" value="C:cytoplasm"/>
    <property type="evidence" value="ECO:0007669"/>
    <property type="project" value="UniProtKB-SubCell"/>
</dbReference>
<dbReference type="GO" id="GO:0016020">
    <property type="term" value="C:membrane"/>
    <property type="evidence" value="ECO:0007669"/>
    <property type="project" value="GOC"/>
</dbReference>
<dbReference type="GO" id="GO:0019171">
    <property type="term" value="F:(3R)-hydroxyacyl-[acyl-carrier-protein] dehydratase activity"/>
    <property type="evidence" value="ECO:0007669"/>
    <property type="project" value="UniProtKB-EC"/>
</dbReference>
<dbReference type="GO" id="GO:0006633">
    <property type="term" value="P:fatty acid biosynthetic process"/>
    <property type="evidence" value="ECO:0007669"/>
    <property type="project" value="UniProtKB-UniRule"/>
</dbReference>
<dbReference type="GO" id="GO:0009245">
    <property type="term" value="P:lipid A biosynthetic process"/>
    <property type="evidence" value="ECO:0007669"/>
    <property type="project" value="UniProtKB-UniRule"/>
</dbReference>
<dbReference type="CDD" id="cd01288">
    <property type="entry name" value="FabZ"/>
    <property type="match status" value="1"/>
</dbReference>
<dbReference type="FunFam" id="3.10.129.10:FF:000001">
    <property type="entry name" value="3-hydroxyacyl-[acyl-carrier-protein] dehydratase FabZ"/>
    <property type="match status" value="1"/>
</dbReference>
<dbReference type="Gene3D" id="3.10.129.10">
    <property type="entry name" value="Hotdog Thioesterase"/>
    <property type="match status" value="1"/>
</dbReference>
<dbReference type="HAMAP" id="MF_00406">
    <property type="entry name" value="FabZ"/>
    <property type="match status" value="1"/>
</dbReference>
<dbReference type="InterPro" id="IPR013114">
    <property type="entry name" value="FabA_FabZ"/>
</dbReference>
<dbReference type="InterPro" id="IPR010084">
    <property type="entry name" value="FabZ"/>
</dbReference>
<dbReference type="InterPro" id="IPR029069">
    <property type="entry name" value="HotDog_dom_sf"/>
</dbReference>
<dbReference type="NCBIfam" id="TIGR01750">
    <property type="entry name" value="fabZ"/>
    <property type="match status" value="1"/>
</dbReference>
<dbReference type="NCBIfam" id="NF000582">
    <property type="entry name" value="PRK00006.1"/>
    <property type="match status" value="1"/>
</dbReference>
<dbReference type="PANTHER" id="PTHR30272">
    <property type="entry name" value="3-HYDROXYACYL-[ACYL-CARRIER-PROTEIN] DEHYDRATASE"/>
    <property type="match status" value="1"/>
</dbReference>
<dbReference type="PANTHER" id="PTHR30272:SF1">
    <property type="entry name" value="3-HYDROXYACYL-[ACYL-CARRIER-PROTEIN] DEHYDRATASE"/>
    <property type="match status" value="1"/>
</dbReference>
<dbReference type="Pfam" id="PF07977">
    <property type="entry name" value="FabA"/>
    <property type="match status" value="1"/>
</dbReference>
<dbReference type="SUPFAM" id="SSF54637">
    <property type="entry name" value="Thioesterase/thiol ester dehydrase-isomerase"/>
    <property type="match status" value="1"/>
</dbReference>
<accession>B4TYE0</accession>
<keyword id="KW-0963">Cytoplasm</keyword>
<keyword id="KW-0441">Lipid A biosynthesis</keyword>
<keyword id="KW-0444">Lipid biosynthesis</keyword>
<keyword id="KW-0443">Lipid metabolism</keyword>
<keyword id="KW-0456">Lyase</keyword>
<feature type="chain" id="PRO_1000123665" description="3-hydroxyacyl-[acyl-carrier-protein] dehydratase FabZ">
    <location>
        <begin position="1"/>
        <end position="151"/>
    </location>
</feature>
<feature type="active site" evidence="1">
    <location>
        <position position="54"/>
    </location>
</feature>
<reference key="1">
    <citation type="journal article" date="2011" name="J. Bacteriol.">
        <title>Comparative genomics of 28 Salmonella enterica isolates: evidence for CRISPR-mediated adaptive sublineage evolution.</title>
        <authorList>
            <person name="Fricke W.F."/>
            <person name="Mammel M.K."/>
            <person name="McDermott P.F."/>
            <person name="Tartera C."/>
            <person name="White D.G."/>
            <person name="Leclerc J.E."/>
            <person name="Ravel J."/>
            <person name="Cebula T.A."/>
        </authorList>
    </citation>
    <scope>NUCLEOTIDE SEQUENCE [LARGE SCALE GENOMIC DNA]</scope>
    <source>
        <strain>CVM19633</strain>
    </source>
</reference>
<evidence type="ECO:0000255" key="1">
    <source>
        <dbReference type="HAMAP-Rule" id="MF_00406"/>
    </source>
</evidence>
<sequence length="151" mass="16999">MTTNTHTLQIEEILELLPHRFPFLLVDRVLDFEEGRFLRAVKNVSVNEPFFQGHFPGKPILPGVLILEAMAQATGILAFKSVGKLEPGELYYFAGIDEARFKRPVVPGDQMIMEVTFEKTRRGLTRFKGVALVDGKVVCEATMMCARSREA</sequence>
<gene>
    <name evidence="1" type="primary">fabZ</name>
    <name type="ordered locus">SeSA_A0253</name>
</gene>
<proteinExistence type="inferred from homology"/>
<comment type="function">
    <text evidence="1">Involved in unsaturated fatty acids biosynthesis. Catalyzes the dehydration of short chain beta-hydroxyacyl-ACPs and long chain saturated and unsaturated beta-hydroxyacyl-ACPs.</text>
</comment>
<comment type="catalytic activity">
    <reaction evidence="1">
        <text>a (3R)-hydroxyacyl-[ACP] = a (2E)-enoyl-[ACP] + H2O</text>
        <dbReference type="Rhea" id="RHEA:13097"/>
        <dbReference type="Rhea" id="RHEA-COMP:9925"/>
        <dbReference type="Rhea" id="RHEA-COMP:9945"/>
        <dbReference type="ChEBI" id="CHEBI:15377"/>
        <dbReference type="ChEBI" id="CHEBI:78784"/>
        <dbReference type="ChEBI" id="CHEBI:78827"/>
        <dbReference type="EC" id="4.2.1.59"/>
    </reaction>
</comment>
<comment type="subcellular location">
    <subcellularLocation>
        <location evidence="1">Cytoplasm</location>
    </subcellularLocation>
</comment>
<comment type="similarity">
    <text evidence="1">Belongs to the thioester dehydratase family. FabZ subfamily.</text>
</comment>
<protein>
    <recommendedName>
        <fullName evidence="1">3-hydroxyacyl-[acyl-carrier-protein] dehydratase FabZ</fullName>
        <ecNumber evidence="1">4.2.1.59</ecNumber>
    </recommendedName>
    <alternativeName>
        <fullName evidence="1">(3R)-hydroxymyristoyl-[acyl-carrier-protein] dehydratase</fullName>
        <shortName evidence="1">(3R)-hydroxymyristoyl-ACP dehydrase</shortName>
    </alternativeName>
    <alternativeName>
        <fullName evidence="1">Beta-hydroxyacyl-ACP dehydratase</fullName>
    </alternativeName>
</protein>
<organism>
    <name type="scientific">Salmonella schwarzengrund (strain CVM19633)</name>
    <dbReference type="NCBI Taxonomy" id="439843"/>
    <lineage>
        <taxon>Bacteria</taxon>
        <taxon>Pseudomonadati</taxon>
        <taxon>Pseudomonadota</taxon>
        <taxon>Gammaproteobacteria</taxon>
        <taxon>Enterobacterales</taxon>
        <taxon>Enterobacteriaceae</taxon>
        <taxon>Salmonella</taxon>
    </lineage>
</organism>
<name>FABZ_SALSV</name>